<organism>
    <name type="scientific">Clostridium perfringens (strain ATCC 13124 / DSM 756 / JCM 1290 / NCIMB 6125 / NCTC 8237 / Type A)</name>
    <dbReference type="NCBI Taxonomy" id="195103"/>
    <lineage>
        <taxon>Bacteria</taxon>
        <taxon>Bacillati</taxon>
        <taxon>Bacillota</taxon>
        <taxon>Clostridia</taxon>
        <taxon>Eubacteriales</taxon>
        <taxon>Clostridiaceae</taxon>
        <taxon>Clostridium</taxon>
    </lineage>
</organism>
<name>ATPB_CLOP1</name>
<gene>
    <name evidence="1" type="primary">atpD</name>
    <name type="ordered locus">CPF_2452</name>
</gene>
<feature type="chain" id="PRO_1000055103" description="ATP synthase subunit beta">
    <location>
        <begin position="1"/>
        <end position="465"/>
    </location>
</feature>
<feature type="binding site" evidence="1">
    <location>
        <begin position="153"/>
        <end position="160"/>
    </location>
    <ligand>
        <name>ATP</name>
        <dbReference type="ChEBI" id="CHEBI:30616"/>
    </ligand>
</feature>
<proteinExistence type="inferred from homology"/>
<sequence>MSNNIGKVVQVIGPVVDIKFANDELPNIFNAIHIKMDDGKILVCEVEQHVGDDIVRTIAMEATEGLRRGVEAVDTGAPISVPVGECVLGRIFNVLGKPLDSGAEVNNEEKYPIHRPAPSFEEQSVVPQMFETGIKVIDLLAPYQRGGKIGLFGGAGVGKTVLIQELINNIAKEHGGLSVFTGVGERSREGNDLYYEMMESGVIKNTALVFGQMNEPPGARMRVALTGLTMAEYFRDQGQDVLLFIDNIFRFSQAGSEVSALLGRIPSAVGYQPTLATEMGALQERITSTTHGSITSVQAVYVPADDLTDPAPATTFNHLDAKTVLSRSIAEIGIYPAVDPLDSSSRILDPRVVGEEHYEVASKVKHILERYKELQDIIAILGVDELADEDKLIVARARRIQKFLSQPFTVAEQFTGMQGRYVPIKETIRGFKEILEGKHDNVPESAFLFAGTIEEVLEKARAMAQ</sequence>
<keyword id="KW-0066">ATP synthesis</keyword>
<keyword id="KW-0067">ATP-binding</keyword>
<keyword id="KW-1003">Cell membrane</keyword>
<keyword id="KW-0139">CF(1)</keyword>
<keyword id="KW-0375">Hydrogen ion transport</keyword>
<keyword id="KW-0406">Ion transport</keyword>
<keyword id="KW-0472">Membrane</keyword>
<keyword id="KW-0547">Nucleotide-binding</keyword>
<keyword id="KW-1278">Translocase</keyword>
<keyword id="KW-0813">Transport</keyword>
<protein>
    <recommendedName>
        <fullName evidence="1">ATP synthase subunit beta</fullName>
        <ecNumber evidence="1">7.1.2.2</ecNumber>
    </recommendedName>
    <alternativeName>
        <fullName evidence="1">ATP synthase F1 sector subunit beta</fullName>
    </alternativeName>
    <alternativeName>
        <fullName evidence="1">F-ATPase subunit beta</fullName>
    </alternativeName>
</protein>
<accession>Q0TNC4</accession>
<dbReference type="EC" id="7.1.2.2" evidence="1"/>
<dbReference type="EMBL" id="CP000246">
    <property type="protein sequence ID" value="ABG84385.1"/>
    <property type="molecule type" value="Genomic_DNA"/>
</dbReference>
<dbReference type="RefSeq" id="WP_003452277.1">
    <property type="nucleotide sequence ID" value="NC_008261.1"/>
</dbReference>
<dbReference type="SMR" id="Q0TNC4"/>
<dbReference type="STRING" id="195103.CPF_2452"/>
<dbReference type="PaxDb" id="195103-CPF_2452"/>
<dbReference type="GeneID" id="93001270"/>
<dbReference type="KEGG" id="cpf:CPF_2452"/>
<dbReference type="eggNOG" id="COG0055">
    <property type="taxonomic scope" value="Bacteria"/>
</dbReference>
<dbReference type="HOGENOM" id="CLU_022398_0_2_9"/>
<dbReference type="Proteomes" id="UP000001823">
    <property type="component" value="Chromosome"/>
</dbReference>
<dbReference type="GO" id="GO:0005886">
    <property type="term" value="C:plasma membrane"/>
    <property type="evidence" value="ECO:0007669"/>
    <property type="project" value="UniProtKB-SubCell"/>
</dbReference>
<dbReference type="GO" id="GO:0045259">
    <property type="term" value="C:proton-transporting ATP synthase complex"/>
    <property type="evidence" value="ECO:0007669"/>
    <property type="project" value="UniProtKB-KW"/>
</dbReference>
<dbReference type="GO" id="GO:0005524">
    <property type="term" value="F:ATP binding"/>
    <property type="evidence" value="ECO:0007669"/>
    <property type="project" value="UniProtKB-UniRule"/>
</dbReference>
<dbReference type="GO" id="GO:0016887">
    <property type="term" value="F:ATP hydrolysis activity"/>
    <property type="evidence" value="ECO:0007669"/>
    <property type="project" value="InterPro"/>
</dbReference>
<dbReference type="GO" id="GO:0046933">
    <property type="term" value="F:proton-transporting ATP synthase activity, rotational mechanism"/>
    <property type="evidence" value="ECO:0007669"/>
    <property type="project" value="UniProtKB-UniRule"/>
</dbReference>
<dbReference type="CDD" id="cd18110">
    <property type="entry name" value="ATP-synt_F1_beta_C"/>
    <property type="match status" value="1"/>
</dbReference>
<dbReference type="CDD" id="cd18115">
    <property type="entry name" value="ATP-synt_F1_beta_N"/>
    <property type="match status" value="1"/>
</dbReference>
<dbReference type="CDD" id="cd01133">
    <property type="entry name" value="F1-ATPase_beta_CD"/>
    <property type="match status" value="1"/>
</dbReference>
<dbReference type="FunFam" id="1.10.1140.10:FF:000001">
    <property type="entry name" value="ATP synthase subunit beta"/>
    <property type="match status" value="1"/>
</dbReference>
<dbReference type="FunFam" id="2.40.10.170:FF:000005">
    <property type="entry name" value="ATP synthase subunit beta"/>
    <property type="match status" value="1"/>
</dbReference>
<dbReference type="FunFam" id="3.40.50.300:FF:000004">
    <property type="entry name" value="ATP synthase subunit beta"/>
    <property type="match status" value="1"/>
</dbReference>
<dbReference type="Gene3D" id="2.40.10.170">
    <property type="match status" value="1"/>
</dbReference>
<dbReference type="Gene3D" id="1.10.1140.10">
    <property type="entry name" value="Bovine Mitochondrial F1-atpase, Atp Synthase Beta Chain, Chain D, domain 3"/>
    <property type="match status" value="1"/>
</dbReference>
<dbReference type="Gene3D" id="3.40.50.300">
    <property type="entry name" value="P-loop containing nucleotide triphosphate hydrolases"/>
    <property type="match status" value="1"/>
</dbReference>
<dbReference type="HAMAP" id="MF_01347">
    <property type="entry name" value="ATP_synth_beta_bact"/>
    <property type="match status" value="1"/>
</dbReference>
<dbReference type="InterPro" id="IPR003593">
    <property type="entry name" value="AAA+_ATPase"/>
</dbReference>
<dbReference type="InterPro" id="IPR055190">
    <property type="entry name" value="ATP-synt_VA_C"/>
</dbReference>
<dbReference type="InterPro" id="IPR005722">
    <property type="entry name" value="ATP_synth_F1_bsu"/>
</dbReference>
<dbReference type="InterPro" id="IPR020003">
    <property type="entry name" value="ATPase_a/bsu_AS"/>
</dbReference>
<dbReference type="InterPro" id="IPR050053">
    <property type="entry name" value="ATPase_alpha/beta_chains"/>
</dbReference>
<dbReference type="InterPro" id="IPR004100">
    <property type="entry name" value="ATPase_F1/V1/A1_a/bsu_N"/>
</dbReference>
<dbReference type="InterPro" id="IPR036121">
    <property type="entry name" value="ATPase_F1/V1/A1_a/bsu_N_sf"/>
</dbReference>
<dbReference type="InterPro" id="IPR000194">
    <property type="entry name" value="ATPase_F1/V1/A1_a/bsu_nucl-bd"/>
</dbReference>
<dbReference type="InterPro" id="IPR024034">
    <property type="entry name" value="ATPase_F1/V1_b/a_C"/>
</dbReference>
<dbReference type="InterPro" id="IPR027417">
    <property type="entry name" value="P-loop_NTPase"/>
</dbReference>
<dbReference type="NCBIfam" id="TIGR01039">
    <property type="entry name" value="atpD"/>
    <property type="match status" value="1"/>
</dbReference>
<dbReference type="PANTHER" id="PTHR15184">
    <property type="entry name" value="ATP SYNTHASE"/>
    <property type="match status" value="1"/>
</dbReference>
<dbReference type="PANTHER" id="PTHR15184:SF71">
    <property type="entry name" value="ATP SYNTHASE SUBUNIT BETA, MITOCHONDRIAL"/>
    <property type="match status" value="1"/>
</dbReference>
<dbReference type="Pfam" id="PF00006">
    <property type="entry name" value="ATP-synt_ab"/>
    <property type="match status" value="1"/>
</dbReference>
<dbReference type="Pfam" id="PF02874">
    <property type="entry name" value="ATP-synt_ab_N"/>
    <property type="match status" value="1"/>
</dbReference>
<dbReference type="Pfam" id="PF22919">
    <property type="entry name" value="ATP-synt_VA_C"/>
    <property type="match status" value="1"/>
</dbReference>
<dbReference type="SMART" id="SM00382">
    <property type="entry name" value="AAA"/>
    <property type="match status" value="1"/>
</dbReference>
<dbReference type="SUPFAM" id="SSF47917">
    <property type="entry name" value="C-terminal domain of alpha and beta subunits of F1 ATP synthase"/>
    <property type="match status" value="1"/>
</dbReference>
<dbReference type="SUPFAM" id="SSF50615">
    <property type="entry name" value="N-terminal domain of alpha and beta subunits of F1 ATP synthase"/>
    <property type="match status" value="1"/>
</dbReference>
<dbReference type="SUPFAM" id="SSF52540">
    <property type="entry name" value="P-loop containing nucleoside triphosphate hydrolases"/>
    <property type="match status" value="1"/>
</dbReference>
<dbReference type="PROSITE" id="PS00152">
    <property type="entry name" value="ATPASE_ALPHA_BETA"/>
    <property type="match status" value="1"/>
</dbReference>
<reference key="1">
    <citation type="journal article" date="2006" name="Genome Res.">
        <title>Skewed genomic variability in strains of the toxigenic bacterial pathogen, Clostridium perfringens.</title>
        <authorList>
            <person name="Myers G.S.A."/>
            <person name="Rasko D.A."/>
            <person name="Cheung J.K."/>
            <person name="Ravel J."/>
            <person name="Seshadri R."/>
            <person name="DeBoy R.T."/>
            <person name="Ren Q."/>
            <person name="Varga J."/>
            <person name="Awad M.M."/>
            <person name="Brinkac L.M."/>
            <person name="Daugherty S.C."/>
            <person name="Haft D.H."/>
            <person name="Dodson R.J."/>
            <person name="Madupu R."/>
            <person name="Nelson W.C."/>
            <person name="Rosovitz M.J."/>
            <person name="Sullivan S.A."/>
            <person name="Khouri H."/>
            <person name="Dimitrov G.I."/>
            <person name="Watkins K.L."/>
            <person name="Mulligan S."/>
            <person name="Benton J."/>
            <person name="Radune D."/>
            <person name="Fisher D.J."/>
            <person name="Atkins H.S."/>
            <person name="Hiscox T."/>
            <person name="Jost B.H."/>
            <person name="Billington S.J."/>
            <person name="Songer J.G."/>
            <person name="McClane B.A."/>
            <person name="Titball R.W."/>
            <person name="Rood J.I."/>
            <person name="Melville S.B."/>
            <person name="Paulsen I.T."/>
        </authorList>
    </citation>
    <scope>NUCLEOTIDE SEQUENCE [LARGE SCALE GENOMIC DNA]</scope>
    <source>
        <strain>ATCC 13124 / DSM 756 / JCM 1290 / NCIMB 6125 / NCTC 8237 / S 107 / Type A</strain>
    </source>
</reference>
<evidence type="ECO:0000255" key="1">
    <source>
        <dbReference type="HAMAP-Rule" id="MF_01347"/>
    </source>
</evidence>
<comment type="function">
    <text evidence="1">Produces ATP from ADP in the presence of a proton gradient across the membrane. The catalytic sites are hosted primarily by the beta subunits.</text>
</comment>
<comment type="catalytic activity">
    <reaction evidence="1">
        <text>ATP + H2O + 4 H(+)(in) = ADP + phosphate + 5 H(+)(out)</text>
        <dbReference type="Rhea" id="RHEA:57720"/>
        <dbReference type="ChEBI" id="CHEBI:15377"/>
        <dbReference type="ChEBI" id="CHEBI:15378"/>
        <dbReference type="ChEBI" id="CHEBI:30616"/>
        <dbReference type="ChEBI" id="CHEBI:43474"/>
        <dbReference type="ChEBI" id="CHEBI:456216"/>
        <dbReference type="EC" id="7.1.2.2"/>
    </reaction>
</comment>
<comment type="subunit">
    <text evidence="1">F-type ATPases have 2 components, CF(1) - the catalytic core - and CF(0) - the membrane proton channel. CF(1) has five subunits: alpha(3), beta(3), gamma(1), delta(1), epsilon(1). CF(0) has three main subunits: a(1), b(2) and c(9-12). The alpha and beta chains form an alternating ring which encloses part of the gamma chain. CF(1) is attached to CF(0) by a central stalk formed by the gamma and epsilon chains, while a peripheral stalk is formed by the delta and b chains.</text>
</comment>
<comment type="subcellular location">
    <subcellularLocation>
        <location evidence="1">Cell membrane</location>
        <topology evidence="1">Peripheral membrane protein</topology>
    </subcellularLocation>
</comment>
<comment type="similarity">
    <text evidence="1">Belongs to the ATPase alpha/beta chains family.</text>
</comment>